<proteinExistence type="evidence at protein level"/>
<dbReference type="EMBL" id="AABR03109459">
    <property type="status" value="NOT_ANNOTATED_CDS"/>
    <property type="molecule type" value="Genomic_DNA"/>
</dbReference>
<dbReference type="EMBL" id="AABR03110870">
    <property type="status" value="NOT_ANNOTATED_CDS"/>
    <property type="molecule type" value="Genomic_DNA"/>
</dbReference>
<dbReference type="EMBL" id="AABR03110947">
    <property type="status" value="NOT_ANNOTATED_CDS"/>
    <property type="molecule type" value="Genomic_DNA"/>
</dbReference>
<dbReference type="EMBL" id="AF473845">
    <property type="protein sequence ID" value="AAL86414.1"/>
    <property type="molecule type" value="mRNA"/>
</dbReference>
<dbReference type="RefSeq" id="XP_038952670.1">
    <property type="nucleotide sequence ID" value="XM_039096742.2"/>
</dbReference>
<dbReference type="RefSeq" id="XP_038952671.1">
    <property type="nucleotide sequence ID" value="XM_039096743.2"/>
</dbReference>
<dbReference type="SMR" id="Q8R4G8"/>
<dbReference type="FunCoup" id="Q8R4G8">
    <property type="interactions" value="1223"/>
</dbReference>
<dbReference type="STRING" id="10116.ENSRNOP00000058222"/>
<dbReference type="iPTMnet" id="Q8R4G8"/>
<dbReference type="PhosphoSitePlus" id="Q8R4G8"/>
<dbReference type="PaxDb" id="10116-ENSRNOP00000058222"/>
<dbReference type="GeneID" id="291772"/>
<dbReference type="AGR" id="RGD:621566"/>
<dbReference type="RGD" id="621566">
    <property type="gene designation" value="Kctd1"/>
</dbReference>
<dbReference type="eggNOG" id="KOG2723">
    <property type="taxonomic scope" value="Eukaryota"/>
</dbReference>
<dbReference type="HOGENOM" id="CLU_357861_0_0_1"/>
<dbReference type="InParanoid" id="Q8R4G8"/>
<dbReference type="PhylomeDB" id="Q8R4G8"/>
<dbReference type="Reactome" id="R-RNO-8866904">
    <property type="pathway name" value="Negative regulation of activity of TFAP2 (AP-2) family transcription factors"/>
</dbReference>
<dbReference type="PRO" id="PR:Q8R4G8"/>
<dbReference type="Proteomes" id="UP000002494">
    <property type="component" value="Unplaced"/>
</dbReference>
<dbReference type="GO" id="GO:0005634">
    <property type="term" value="C:nucleus"/>
    <property type="evidence" value="ECO:0000250"/>
    <property type="project" value="UniProtKB"/>
</dbReference>
<dbReference type="GO" id="GO:0042802">
    <property type="term" value="F:identical protein binding"/>
    <property type="evidence" value="ECO:0000266"/>
    <property type="project" value="RGD"/>
</dbReference>
<dbReference type="GO" id="GO:0003714">
    <property type="term" value="F:transcription corepressor activity"/>
    <property type="evidence" value="ECO:0000266"/>
    <property type="project" value="RGD"/>
</dbReference>
<dbReference type="GO" id="GO:0045892">
    <property type="term" value="P:negative regulation of DNA-templated transcription"/>
    <property type="evidence" value="ECO:0000250"/>
    <property type="project" value="UniProtKB"/>
</dbReference>
<dbReference type="GO" id="GO:0051260">
    <property type="term" value="P:protein homooligomerization"/>
    <property type="evidence" value="ECO:0007669"/>
    <property type="project" value="InterPro"/>
</dbReference>
<dbReference type="CDD" id="cd18387">
    <property type="entry name" value="BTB_POZ_KCTD1"/>
    <property type="match status" value="1"/>
</dbReference>
<dbReference type="FunFam" id="3.30.710.10:FF:000003">
    <property type="entry name" value="BTB/POZ domain-containing protein KCTD6 isoform X2"/>
    <property type="match status" value="1"/>
</dbReference>
<dbReference type="Gene3D" id="3.30.710.10">
    <property type="entry name" value="Potassium Channel Kv1.1, Chain A"/>
    <property type="match status" value="1"/>
</dbReference>
<dbReference type="InterPro" id="IPR000210">
    <property type="entry name" value="BTB/POZ_dom"/>
</dbReference>
<dbReference type="InterPro" id="IPR048599">
    <property type="entry name" value="BTB_POZ_KCTD1"/>
</dbReference>
<dbReference type="InterPro" id="IPR048595">
    <property type="entry name" value="KCTD1-15-like_C"/>
</dbReference>
<dbReference type="InterPro" id="IPR011333">
    <property type="entry name" value="SKP1/BTB/POZ_sf"/>
</dbReference>
<dbReference type="InterPro" id="IPR003131">
    <property type="entry name" value="T1-type_BTB"/>
</dbReference>
<dbReference type="PANTHER" id="PTHR14499:SF65">
    <property type="entry name" value="BTB_POZ DOMAIN-CONTAINING PROTEIN KCTD1"/>
    <property type="match status" value="1"/>
</dbReference>
<dbReference type="PANTHER" id="PTHR14499">
    <property type="entry name" value="POTASSIUM CHANNEL TETRAMERIZATION DOMAIN-CONTAINING"/>
    <property type="match status" value="1"/>
</dbReference>
<dbReference type="Pfam" id="PF02214">
    <property type="entry name" value="BTB_2"/>
    <property type="match status" value="1"/>
</dbReference>
<dbReference type="Pfam" id="PF20871">
    <property type="entry name" value="KCTD1-15_CTD"/>
    <property type="match status" value="1"/>
</dbReference>
<dbReference type="SMART" id="SM00225">
    <property type="entry name" value="BTB"/>
    <property type="match status" value="1"/>
</dbReference>
<dbReference type="SUPFAM" id="SSF54695">
    <property type="entry name" value="POZ domain"/>
    <property type="match status" value="1"/>
</dbReference>
<comment type="function">
    <text evidence="2">May repress the transcriptional activity of AP-2 family members, including TFAP2A, TFAP2B and TFAP2C to various extent.</text>
</comment>
<comment type="subunit">
    <text evidence="2">Forms homopentamers. Interacts with KCTD15, probably forming heteropentamers depending on its abundance in a cell-type dependent manner. Interacts with TFAP2A, TFAP2B and TFAP2C via the BTB domain.</text>
</comment>
<comment type="subcellular location">
    <subcellularLocation>
        <location evidence="2">Nucleus</location>
    </subcellularLocation>
</comment>
<comment type="developmental stage">
    <text>Expressed during spermatogenesis in stage-synchronized testes.</text>
</comment>
<comment type="PTM">
    <text evidence="1">Sumoylated.</text>
</comment>
<gene>
    <name type="primary">Kctd1</name>
    <name type="synonym">Vad6</name>
</gene>
<keyword id="KW-0539">Nucleus</keyword>
<keyword id="KW-0597">Phosphoprotein</keyword>
<keyword id="KW-1185">Reference proteome</keyword>
<keyword id="KW-0678">Repressor</keyword>
<keyword id="KW-0804">Transcription</keyword>
<keyword id="KW-0805">Transcription regulation</keyword>
<keyword id="KW-0832">Ubl conjugation</keyword>
<protein>
    <recommendedName>
        <fullName>BTB/POZ domain-containing protein KCTD1</fullName>
    </recommendedName>
    <alternativeName>
        <fullName>Vitamin A-deficient testicular protein 6</fullName>
    </alternativeName>
</protein>
<name>KCTD1_RAT</name>
<feature type="chain" id="PRO_0000247146" description="BTB/POZ domain-containing protein KCTD1">
    <location>
        <begin position="1"/>
        <end position="257"/>
    </location>
</feature>
<feature type="domain" description="BTB">
    <location>
        <begin position="30"/>
        <end position="100"/>
    </location>
</feature>
<feature type="region of interest" description="Disordered" evidence="3">
    <location>
        <begin position="1"/>
        <end position="25"/>
    </location>
</feature>
<feature type="compositionally biased region" description="Polar residues" evidence="3">
    <location>
        <begin position="9"/>
        <end position="25"/>
    </location>
</feature>
<feature type="modified residue" description="Phosphoserine" evidence="5">
    <location>
        <position position="9"/>
    </location>
</feature>
<feature type="modified residue" description="Phosphoserine" evidence="5">
    <location>
        <position position="12"/>
    </location>
</feature>
<feature type="sequence conflict" description="In Ref. 2; AAL86414." evidence="4" ref="2">
    <original>R</original>
    <variation>W</variation>
    <location>
        <position position="250"/>
    </location>
</feature>
<evidence type="ECO:0000250" key="1"/>
<evidence type="ECO:0000250" key="2">
    <source>
        <dbReference type="UniProtKB" id="Q719H9"/>
    </source>
</evidence>
<evidence type="ECO:0000256" key="3">
    <source>
        <dbReference type="SAM" id="MobiDB-lite"/>
    </source>
</evidence>
<evidence type="ECO:0000305" key="4"/>
<evidence type="ECO:0007744" key="5">
    <source>
    </source>
</evidence>
<reference key="1">
    <citation type="journal article" date="2004" name="Nature">
        <title>Genome sequence of the Brown Norway rat yields insights into mammalian evolution.</title>
        <authorList>
            <person name="Gibbs R.A."/>
            <person name="Weinstock G.M."/>
            <person name="Metzker M.L."/>
            <person name="Muzny D.M."/>
            <person name="Sodergren E.J."/>
            <person name="Scherer S."/>
            <person name="Scott G."/>
            <person name="Steffen D."/>
            <person name="Worley K.C."/>
            <person name="Burch P.E."/>
            <person name="Okwuonu G."/>
            <person name="Hines S."/>
            <person name="Lewis L."/>
            <person name="Deramo C."/>
            <person name="Delgado O."/>
            <person name="Dugan-Rocha S."/>
            <person name="Miner G."/>
            <person name="Morgan M."/>
            <person name="Hawes A."/>
            <person name="Gill R."/>
            <person name="Holt R.A."/>
            <person name="Adams M.D."/>
            <person name="Amanatides P.G."/>
            <person name="Baden-Tillson H."/>
            <person name="Barnstead M."/>
            <person name="Chin S."/>
            <person name="Evans C.A."/>
            <person name="Ferriera S."/>
            <person name="Fosler C."/>
            <person name="Glodek A."/>
            <person name="Gu Z."/>
            <person name="Jennings D."/>
            <person name="Kraft C.L."/>
            <person name="Nguyen T."/>
            <person name="Pfannkoch C.M."/>
            <person name="Sitter C."/>
            <person name="Sutton G.G."/>
            <person name="Venter J.C."/>
            <person name="Woodage T."/>
            <person name="Smith D."/>
            <person name="Lee H.-M."/>
            <person name="Gustafson E."/>
            <person name="Cahill P."/>
            <person name="Kana A."/>
            <person name="Doucette-Stamm L."/>
            <person name="Weinstock K."/>
            <person name="Fechtel K."/>
            <person name="Weiss R.B."/>
            <person name="Dunn D.M."/>
            <person name="Green E.D."/>
            <person name="Blakesley R.W."/>
            <person name="Bouffard G.G."/>
            <person name="De Jong P.J."/>
            <person name="Osoegawa K."/>
            <person name="Zhu B."/>
            <person name="Marra M."/>
            <person name="Schein J."/>
            <person name="Bosdet I."/>
            <person name="Fjell C."/>
            <person name="Jones S."/>
            <person name="Krzywinski M."/>
            <person name="Mathewson C."/>
            <person name="Siddiqui A."/>
            <person name="Wye N."/>
            <person name="McPherson J."/>
            <person name="Zhao S."/>
            <person name="Fraser C.M."/>
            <person name="Shetty J."/>
            <person name="Shatsman S."/>
            <person name="Geer K."/>
            <person name="Chen Y."/>
            <person name="Abramzon S."/>
            <person name="Nierman W.C."/>
            <person name="Havlak P.H."/>
            <person name="Chen R."/>
            <person name="Durbin K.J."/>
            <person name="Egan A."/>
            <person name="Ren Y."/>
            <person name="Song X.-Z."/>
            <person name="Li B."/>
            <person name="Liu Y."/>
            <person name="Qin X."/>
            <person name="Cawley S."/>
            <person name="Cooney A.J."/>
            <person name="D'Souza L.M."/>
            <person name="Martin K."/>
            <person name="Wu J.Q."/>
            <person name="Gonzalez-Garay M.L."/>
            <person name="Jackson A.R."/>
            <person name="Kalafus K.J."/>
            <person name="McLeod M.P."/>
            <person name="Milosavljevic A."/>
            <person name="Virk D."/>
            <person name="Volkov A."/>
            <person name="Wheeler D.A."/>
            <person name="Zhang Z."/>
            <person name="Bailey J.A."/>
            <person name="Eichler E.E."/>
            <person name="Tuzun E."/>
            <person name="Birney E."/>
            <person name="Mongin E."/>
            <person name="Ureta-Vidal A."/>
            <person name="Woodwark C."/>
            <person name="Zdobnov E."/>
            <person name="Bork P."/>
            <person name="Suyama M."/>
            <person name="Torrents D."/>
            <person name="Alexandersson M."/>
            <person name="Trask B.J."/>
            <person name="Young J.M."/>
            <person name="Huang H."/>
            <person name="Wang H."/>
            <person name="Xing H."/>
            <person name="Daniels S."/>
            <person name="Gietzen D."/>
            <person name="Schmidt J."/>
            <person name="Stevens K."/>
            <person name="Vitt U."/>
            <person name="Wingrove J."/>
            <person name="Camara F."/>
            <person name="Mar Alba M."/>
            <person name="Abril J.F."/>
            <person name="Guigo R."/>
            <person name="Smit A."/>
            <person name="Dubchak I."/>
            <person name="Rubin E.M."/>
            <person name="Couronne O."/>
            <person name="Poliakov A."/>
            <person name="Huebner N."/>
            <person name="Ganten D."/>
            <person name="Goesele C."/>
            <person name="Hummel O."/>
            <person name="Kreitler T."/>
            <person name="Lee Y.-A."/>
            <person name="Monti J."/>
            <person name="Schulz H."/>
            <person name="Zimdahl H."/>
            <person name="Himmelbauer H."/>
            <person name="Lehrach H."/>
            <person name="Jacob H.J."/>
            <person name="Bromberg S."/>
            <person name="Gullings-Handley J."/>
            <person name="Jensen-Seaman M.I."/>
            <person name="Kwitek A.E."/>
            <person name="Lazar J."/>
            <person name="Pasko D."/>
            <person name="Tonellato P.J."/>
            <person name="Twigger S."/>
            <person name="Ponting C.P."/>
            <person name="Duarte J.M."/>
            <person name="Rice S."/>
            <person name="Goodstadt L."/>
            <person name="Beatson S.A."/>
            <person name="Emes R.D."/>
            <person name="Winter E.E."/>
            <person name="Webber C."/>
            <person name="Brandt P."/>
            <person name="Nyakatura G."/>
            <person name="Adetobi M."/>
            <person name="Chiaromonte F."/>
            <person name="Elnitski L."/>
            <person name="Eswara P."/>
            <person name="Hardison R.C."/>
            <person name="Hou M."/>
            <person name="Kolbe D."/>
            <person name="Makova K."/>
            <person name="Miller W."/>
            <person name="Nekrutenko A."/>
            <person name="Riemer C."/>
            <person name="Schwartz S."/>
            <person name="Taylor J."/>
            <person name="Yang S."/>
            <person name="Zhang Y."/>
            <person name="Lindpaintner K."/>
            <person name="Andrews T.D."/>
            <person name="Caccamo M."/>
            <person name="Clamp M."/>
            <person name="Clarke L."/>
            <person name="Curwen V."/>
            <person name="Durbin R.M."/>
            <person name="Eyras E."/>
            <person name="Searle S.M."/>
            <person name="Cooper G.M."/>
            <person name="Batzoglou S."/>
            <person name="Brudno M."/>
            <person name="Sidow A."/>
            <person name="Stone E.A."/>
            <person name="Payseur B.A."/>
            <person name="Bourque G."/>
            <person name="Lopez-Otin C."/>
            <person name="Puente X.S."/>
            <person name="Chakrabarti K."/>
            <person name="Chatterji S."/>
            <person name="Dewey C."/>
            <person name="Pachter L."/>
            <person name="Bray N."/>
            <person name="Yap V.B."/>
            <person name="Caspi A."/>
            <person name="Tesler G."/>
            <person name="Pevzner P.A."/>
            <person name="Haussler D."/>
            <person name="Roskin K.M."/>
            <person name="Baertsch R."/>
            <person name="Clawson H."/>
            <person name="Furey T.S."/>
            <person name="Hinrichs A.S."/>
            <person name="Karolchik D."/>
            <person name="Kent W.J."/>
            <person name="Rosenbloom K.R."/>
            <person name="Trumbower H."/>
            <person name="Weirauch M."/>
            <person name="Cooper D.N."/>
            <person name="Stenson P.D."/>
            <person name="Ma B."/>
            <person name="Brent M."/>
            <person name="Arumugam M."/>
            <person name="Shteynberg D."/>
            <person name="Copley R.R."/>
            <person name="Taylor M.S."/>
            <person name="Riethman H."/>
            <person name="Mudunuri U."/>
            <person name="Peterson J."/>
            <person name="Guyer M."/>
            <person name="Felsenfeld A."/>
            <person name="Old S."/>
            <person name="Mockrin S."/>
            <person name="Collins F.S."/>
        </authorList>
    </citation>
    <scope>NUCLEOTIDE SEQUENCE [LARGE SCALE GENOMIC DNA]</scope>
    <source>
        <strain>Brown Norway</strain>
    </source>
</reference>
<reference key="2">
    <citation type="journal article" date="2003" name="Biochem. Biophys. Res. Commun.">
        <title>Identification of novel genes expressed during spermatogenesis in stage-synchronized rat testes by differential display.</title>
        <authorList>
            <person name="Luk J.M."/>
            <person name="Mok B.W."/>
            <person name="Shum C.K."/>
            <person name="Yeung W.S."/>
            <person name="Tam P.C."/>
            <person name="Tse J.Y."/>
            <person name="Chow J.F."/>
            <person name="Woo J."/>
            <person name="Kam K."/>
            <person name="Lee K.F."/>
        </authorList>
    </citation>
    <scope>NUCLEOTIDE SEQUENCE [MRNA] OF 177-257</scope>
</reference>
<reference key="3">
    <citation type="journal article" date="2012" name="Nat. Commun.">
        <title>Quantitative maps of protein phosphorylation sites across 14 different rat organs and tissues.</title>
        <authorList>
            <person name="Lundby A."/>
            <person name="Secher A."/>
            <person name="Lage K."/>
            <person name="Nordsborg N.B."/>
            <person name="Dmytriyev A."/>
            <person name="Lundby C."/>
            <person name="Olsen J.V."/>
        </authorList>
    </citation>
    <scope>PHOSPHORYLATION [LARGE SCALE ANALYSIS] AT SER-9 AND SER-12</scope>
    <scope>IDENTIFICATION BY MASS SPECTROMETRY [LARGE SCALE ANALYSIS]</scope>
</reference>
<organism>
    <name type="scientific">Rattus norvegicus</name>
    <name type="common">Rat</name>
    <dbReference type="NCBI Taxonomy" id="10116"/>
    <lineage>
        <taxon>Eukaryota</taxon>
        <taxon>Metazoa</taxon>
        <taxon>Chordata</taxon>
        <taxon>Craniata</taxon>
        <taxon>Vertebrata</taxon>
        <taxon>Euteleostomi</taxon>
        <taxon>Mammalia</taxon>
        <taxon>Eutheria</taxon>
        <taxon>Euarchontoglires</taxon>
        <taxon>Glires</taxon>
        <taxon>Rodentia</taxon>
        <taxon>Myomorpha</taxon>
        <taxon>Muroidea</taxon>
        <taxon>Muridae</taxon>
        <taxon>Murinae</taxon>
        <taxon>Rattus</taxon>
    </lineage>
</organism>
<sequence>MSRPLITRSPASPLNNQGIPTPAQLTKSNAPVHIDVGGHMYTSSLATLTKYPESRIGRLFDGTEPIVLDSLKQHYFIDRDGQMFRYILNFLRTSKLLIPDDFKDYTLLYEEAKYFQLQPMLLEMERWKQDRETSRFSRPCECLVVRVAPDLGERITLSGDKSLIEEVFPEIGDVMCNSVNAGWNHDSTHVIRFPLNGYCHLNSVQVLERLQQRGFEIVGSCGGGVDSSQFSEYVLRRELRRTPRVPSVIRIKQEPLD</sequence>
<accession>Q8R4G8</accession>